<comment type="subcellular location">
    <subcellularLocation>
        <location>Secreted</location>
    </subcellularLocation>
</comment>
<comment type="tissue specificity">
    <text>Pollen specific.</text>
</comment>
<comment type="allergen">
    <text evidence="3">Causes an allergic reaction in human. Causes grass pollen allergy. Binds to IgE.</text>
</comment>
<comment type="similarity">
    <text evidence="4">Belongs to the expansin family. Expansin B subfamily.</text>
</comment>
<protein>
    <recommendedName>
        <fullName>Pollen allergen Phl p 2</fullName>
    </recommendedName>
    <alternativeName>
        <fullName>Allergen Phl p II</fullName>
    </alternativeName>
    <allergenName>Phl p 2</allergenName>
</protein>
<organism>
    <name type="scientific">Phleum pratense</name>
    <name type="common">Common timothy</name>
    <dbReference type="NCBI Taxonomy" id="15957"/>
    <lineage>
        <taxon>Eukaryota</taxon>
        <taxon>Viridiplantae</taxon>
        <taxon>Streptophyta</taxon>
        <taxon>Embryophyta</taxon>
        <taxon>Tracheophyta</taxon>
        <taxon>Spermatophyta</taxon>
        <taxon>Magnoliopsida</taxon>
        <taxon>Liliopsida</taxon>
        <taxon>Poales</taxon>
        <taxon>Poaceae</taxon>
        <taxon>BOP clade</taxon>
        <taxon>Pooideae</taxon>
        <taxon>Poodae</taxon>
        <taxon>Poeae</taxon>
        <taxon>Poeae Chloroplast Group 2 (Poeae type)</taxon>
        <taxon>Poodinae</taxon>
        <taxon>Phleinae</taxon>
        <taxon>Phleum</taxon>
    </lineage>
</organism>
<reference key="1">
    <citation type="journal article" date="1993" name="FEBS Lett.">
        <title>Molecular characterization of Phl p II, a major timothy grass (Phleum pratense) pollen allergen.</title>
        <authorList>
            <person name="Dolecek C."/>
            <person name="Vrtala S."/>
            <person name="Laffer S."/>
            <person name="Steinberger P."/>
            <person name="Kraft D."/>
            <person name="Scheiner O."/>
            <person name="Valenta R."/>
        </authorList>
    </citation>
    <scope>NUCLEOTIDE SEQUENCE [MRNA]</scope>
    <scope>ALLERGEN</scope>
    <source>
        <tissue>Pollen</tissue>
    </source>
</reference>
<reference key="2">
    <citation type="journal article" date="1997" name="Int. Arch. Allergy Immunol.">
        <title>X-ray crystal structures of birch pollen profilin and Phl p 2.</title>
        <authorList>
            <person name="Fedorov A.A."/>
            <person name="Ball T."/>
            <person name="Valenta R."/>
            <person name="Almo S.C."/>
        </authorList>
    </citation>
    <scope>X-RAY CRYSTALLOGRAPHY (1.9 ANGSTROMS)</scope>
</reference>
<reference key="3">
    <citation type="journal article" date="1999" name="Structure">
        <title>An immunoglobulin-like fold in a major plant allergen: the solution structure of Phl p 2 from timothy grass pollen.</title>
        <authorList>
            <person name="De Marino S."/>
            <person name="Morelli M.A.C."/>
            <person name="Fraternali F."/>
            <person name="Tamborini E."/>
            <person name="Musco G."/>
            <person name="Vrtala S."/>
            <person name="Dolecek C."/>
            <person name="Arosio P."/>
            <person name="Valenta R."/>
            <person name="Pastore A."/>
        </authorList>
    </citation>
    <scope>STRUCTURE BY NMR</scope>
</reference>
<proteinExistence type="evidence at protein level"/>
<dbReference type="EMBL" id="X75925">
    <property type="protein sequence ID" value="CAA53529.1"/>
    <property type="molecule type" value="mRNA"/>
</dbReference>
<dbReference type="PIR" id="S39457">
    <property type="entry name" value="S39457"/>
</dbReference>
<dbReference type="PDB" id="1BMW">
    <property type="method" value="NMR"/>
    <property type="chains" value="A=27-122"/>
</dbReference>
<dbReference type="PDB" id="1WHO">
    <property type="method" value="X-ray"/>
    <property type="resolution" value="1.90 A"/>
    <property type="chains" value="A=27-122"/>
</dbReference>
<dbReference type="PDB" id="1WHP">
    <property type="method" value="X-ray"/>
    <property type="resolution" value="3.00 A"/>
    <property type="chains" value="A=27-122"/>
</dbReference>
<dbReference type="PDB" id="2VXQ">
    <property type="method" value="X-ray"/>
    <property type="resolution" value="1.90 A"/>
    <property type="chains" value="A=27-122"/>
</dbReference>
<dbReference type="PDBsum" id="1BMW"/>
<dbReference type="PDBsum" id="1WHO"/>
<dbReference type="PDBsum" id="1WHP"/>
<dbReference type="PDBsum" id="2VXQ"/>
<dbReference type="SMR" id="P43214"/>
<dbReference type="Allergome" id="3419">
    <property type="allergen name" value="Phl p 2.0101"/>
</dbReference>
<dbReference type="Allergome" id="555">
    <property type="allergen name" value="Phl p 2"/>
</dbReference>
<dbReference type="ABCD" id="P43214">
    <property type="antibodies" value="7 sequenced antibodies"/>
</dbReference>
<dbReference type="EvolutionaryTrace" id="P43214"/>
<dbReference type="GO" id="GO:0005576">
    <property type="term" value="C:extracellular region"/>
    <property type="evidence" value="ECO:0007669"/>
    <property type="project" value="UniProtKB-SubCell"/>
</dbReference>
<dbReference type="GO" id="GO:0009828">
    <property type="term" value="P:plant-type cell wall loosening"/>
    <property type="evidence" value="ECO:0000250"/>
    <property type="project" value="UniProtKB"/>
</dbReference>
<dbReference type="Gene3D" id="2.60.40.760">
    <property type="entry name" value="Expansin, cellulose-binding-like domain"/>
    <property type="match status" value="1"/>
</dbReference>
<dbReference type="InterPro" id="IPR005453">
    <property type="entry name" value="Allergen_Lolp2"/>
</dbReference>
<dbReference type="InterPro" id="IPR007117">
    <property type="entry name" value="Expansin_CBD"/>
</dbReference>
<dbReference type="InterPro" id="IPR036749">
    <property type="entry name" value="Expansin_CBD_sf"/>
</dbReference>
<dbReference type="PANTHER" id="PTHR31692">
    <property type="entry name" value="EXPANSIN-B3"/>
    <property type="match status" value="1"/>
</dbReference>
<dbReference type="PANTHER" id="PTHR31692:SF13">
    <property type="entry name" value="OS04G0328900 PROTEIN"/>
    <property type="match status" value="1"/>
</dbReference>
<dbReference type="Pfam" id="PF01357">
    <property type="entry name" value="Expansin_C"/>
    <property type="match status" value="1"/>
</dbReference>
<dbReference type="PRINTS" id="PR01637">
    <property type="entry name" value="LOLP2ALLERGN"/>
</dbReference>
<dbReference type="SUPFAM" id="SSF49590">
    <property type="entry name" value="PHL pollen allergen"/>
    <property type="match status" value="1"/>
</dbReference>
<dbReference type="PROSITE" id="PS50843">
    <property type="entry name" value="EXPANSIN_CBD"/>
    <property type="match status" value="1"/>
</dbReference>
<gene>
    <name type="primary">PHLPII</name>
</gene>
<evidence type="ECO:0000255" key="1"/>
<evidence type="ECO:0000255" key="2">
    <source>
        <dbReference type="PROSITE-ProRule" id="PRU00078"/>
    </source>
</evidence>
<evidence type="ECO:0000269" key="3">
    <source>
    </source>
</evidence>
<evidence type="ECO:0000305" key="4"/>
<evidence type="ECO:0007829" key="5">
    <source>
        <dbReference type="PDB" id="1BMW"/>
    </source>
</evidence>
<evidence type="ECO:0007829" key="6">
    <source>
        <dbReference type="PDB" id="1WHO"/>
    </source>
</evidence>
<evidence type="ECO:0007829" key="7">
    <source>
        <dbReference type="PDB" id="2VXQ"/>
    </source>
</evidence>
<name>MPAP2_PHLPR</name>
<feature type="signal peptide" evidence="1">
    <location>
        <begin position="1"/>
        <end position="26"/>
    </location>
</feature>
<feature type="chain" id="PRO_0000008723" description="Pollen allergen Phl p 2">
    <location>
        <begin position="27"/>
        <end position="122"/>
    </location>
</feature>
<feature type="domain" description="Expansin-like CBD" evidence="2">
    <location>
        <begin position="41"/>
        <end position="120"/>
    </location>
</feature>
<feature type="strand" evidence="6">
    <location>
        <begin position="29"/>
        <end position="34"/>
    </location>
</feature>
<feature type="strand" evidence="6">
    <location>
        <begin position="42"/>
        <end position="49"/>
    </location>
</feature>
<feature type="strand" evidence="5">
    <location>
        <begin position="50"/>
        <end position="52"/>
    </location>
</feature>
<feature type="strand" evidence="6">
    <location>
        <begin position="54"/>
        <end position="60"/>
    </location>
</feature>
<feature type="strand" evidence="5">
    <location>
        <begin position="62"/>
        <end position="66"/>
    </location>
</feature>
<feature type="helix" evidence="7">
    <location>
        <begin position="74"/>
        <end position="76"/>
    </location>
</feature>
<feature type="strand" evidence="6">
    <location>
        <begin position="77"/>
        <end position="81"/>
    </location>
</feature>
<feature type="strand" evidence="6">
    <location>
        <begin position="88"/>
        <end position="96"/>
    </location>
</feature>
<feature type="turn" evidence="5">
    <location>
        <begin position="97"/>
        <end position="99"/>
    </location>
</feature>
<feature type="strand" evidence="6">
    <location>
        <begin position="101"/>
        <end position="108"/>
    </location>
</feature>
<feature type="strand" evidence="5">
    <location>
        <begin position="114"/>
        <end position="116"/>
    </location>
</feature>
<sequence length="122" mass="13362">MSMASSSSSSLLAMAVLAALFAGAWCVPKVTFTVEKGSNEKHLAVLVKYEGDTMAEVELREHGSDEWVAMTKGEGGVWTFDSEEPLQGPFNFRFLTEKGMKNVFDDVVPEKYTIGATYAPEE</sequence>
<keyword id="KW-0002">3D-structure</keyword>
<keyword id="KW-0020">Allergen</keyword>
<keyword id="KW-0964">Secreted</keyword>
<keyword id="KW-0732">Signal</keyword>
<accession>P43214</accession>